<evidence type="ECO:0000250" key="1"/>
<evidence type="ECO:0000305" key="2"/>
<proteinExistence type="inferred from homology"/>
<accession>Q2UG94</accession>
<gene>
    <name type="primary">NUT1</name>
    <name type="synonym">MED5</name>
    <name type="ORF">AO090023000929</name>
</gene>
<keyword id="KW-0010">Activator</keyword>
<keyword id="KW-0539">Nucleus</keyword>
<keyword id="KW-1185">Reference proteome</keyword>
<keyword id="KW-0804">Transcription</keyword>
<keyword id="KW-0805">Transcription regulation</keyword>
<reference key="1">
    <citation type="journal article" date="2005" name="Nature">
        <title>Genome sequencing and analysis of Aspergillus oryzae.</title>
        <authorList>
            <person name="Machida M."/>
            <person name="Asai K."/>
            <person name="Sano M."/>
            <person name="Tanaka T."/>
            <person name="Kumagai T."/>
            <person name="Terai G."/>
            <person name="Kusumoto K."/>
            <person name="Arima T."/>
            <person name="Akita O."/>
            <person name="Kashiwagi Y."/>
            <person name="Abe K."/>
            <person name="Gomi K."/>
            <person name="Horiuchi H."/>
            <person name="Kitamoto K."/>
            <person name="Kobayashi T."/>
            <person name="Takeuchi M."/>
            <person name="Denning D.W."/>
            <person name="Galagan J.E."/>
            <person name="Nierman W.C."/>
            <person name="Yu J."/>
            <person name="Archer D.B."/>
            <person name="Bennett J.W."/>
            <person name="Bhatnagar D."/>
            <person name="Cleveland T.E."/>
            <person name="Fedorova N.D."/>
            <person name="Gotoh O."/>
            <person name="Horikawa H."/>
            <person name="Hosoyama A."/>
            <person name="Ichinomiya M."/>
            <person name="Igarashi R."/>
            <person name="Iwashita K."/>
            <person name="Juvvadi P.R."/>
            <person name="Kato M."/>
            <person name="Kato Y."/>
            <person name="Kin T."/>
            <person name="Kokubun A."/>
            <person name="Maeda H."/>
            <person name="Maeyama N."/>
            <person name="Maruyama J."/>
            <person name="Nagasaki H."/>
            <person name="Nakajima T."/>
            <person name="Oda K."/>
            <person name="Okada K."/>
            <person name="Paulsen I."/>
            <person name="Sakamoto K."/>
            <person name="Sawano T."/>
            <person name="Takahashi M."/>
            <person name="Takase K."/>
            <person name="Terabayashi Y."/>
            <person name="Wortman J.R."/>
            <person name="Yamada O."/>
            <person name="Yamagata Y."/>
            <person name="Anazawa H."/>
            <person name="Hata Y."/>
            <person name="Koide Y."/>
            <person name="Komori T."/>
            <person name="Koyama Y."/>
            <person name="Minetoki T."/>
            <person name="Suharnan S."/>
            <person name="Tanaka A."/>
            <person name="Isono K."/>
            <person name="Kuhara S."/>
            <person name="Ogasawara N."/>
            <person name="Kikuchi H."/>
        </authorList>
    </citation>
    <scope>NUCLEOTIDE SEQUENCE [LARGE SCALE GENOMIC DNA]</scope>
    <source>
        <strain>ATCC 42149 / RIB 40</strain>
    </source>
</reference>
<comment type="function">
    <text evidence="1">Component of the Mediator complex, a coactivator involved in the regulated transcription of nearly all RNA polymerase II-dependent genes. Mediator functions as a bridge to convey information from gene-specific regulatory proteins to the basal RNA polymerase II transcription machinery. Mediator is recruited to promoters by direct interactions with regulatory proteins and serves as a scaffold for the assembly of a functional preinitiation complex with RNA polymerase II and the general transcription factors (By similarity).</text>
</comment>
<comment type="subunit">
    <text evidence="1">Component of the Mediator complex.</text>
</comment>
<comment type="subcellular location">
    <subcellularLocation>
        <location evidence="1">Nucleus</location>
    </subcellularLocation>
</comment>
<comment type="similarity">
    <text evidence="2">Belongs to the Mediator complex subunit 5 family.</text>
</comment>
<comment type="sequence caution" evidence="2">
    <conflict type="erroneous gene model prediction">
        <sequence resource="EMBL-CDS" id="BAE59421"/>
    </conflict>
</comment>
<organism>
    <name type="scientific">Aspergillus oryzae (strain ATCC 42149 / RIB 40)</name>
    <name type="common">Yellow koji mold</name>
    <dbReference type="NCBI Taxonomy" id="510516"/>
    <lineage>
        <taxon>Eukaryota</taxon>
        <taxon>Fungi</taxon>
        <taxon>Dikarya</taxon>
        <taxon>Ascomycota</taxon>
        <taxon>Pezizomycotina</taxon>
        <taxon>Eurotiomycetes</taxon>
        <taxon>Eurotiomycetidae</taxon>
        <taxon>Eurotiales</taxon>
        <taxon>Aspergillaceae</taxon>
        <taxon>Aspergillus</taxon>
        <taxon>Aspergillus subgen. Circumdati</taxon>
    </lineage>
</organism>
<sequence length="1013" mass="111424">MTSSEQWRAFLHQCLMRRIDAAEFKNLSKILFRRCPTAEGTLLDVLLEIRLATGIKWDPLLPLYIDCLCKMGKVQTSTVLTSLLKYSSIHDKPQSPSSETVQSKMALKCYTLMTDIRVIQDAMLSVSTGSTPKSLAEAVGIFSAIIDWIQAVVAWHNNHIDPSQQTGGLMSSPDAVSLFESLGILLTALSGTGKGIEVLSSDSHEALKVKLGQALSAYLPLCMEVSLPLRNRLDSLQKGFNLYGEPPNKSLQSMMDNVNVNALQFEASVMDGPVINSRAGLYIYINAMLVGRPLVDDSMLLNYLTNRYGGHYDVLVEEVITATFDVLSNALYRNESSRTMFLFRSFLVNKLPSFFAAMLAASMVSLPMEMCISHALSRLDPNTFPSFSQMFAMQGSTVLSEVRPEFLFACASHKLIPESSIERLLGENPMQTPPVGYNKDDLVSQINTNQERAEQLVSELESTEGNAGAIVAAITEVMHNLCNQKETMTLKSICNSLSRRPQALDVILLFRSAKQVLQPLCALLDSWHWDEDQGESQPVYDEFGSILLLVLTFKYRYDLRPYDLGITSNDSFVLKLLDCGSSSQNLDDLSEKQNRNLGAWITALFIAEGISEETMSSCSPQEFYLLVTTLFNQSLTACEAGKLEFDTLKGGFEYLLEPFLLPSLVVALTWLGNHIWETESDPTIPLKTLQSLVNPSSISGDAREIHKTVLNITARSLDEQLKDIRSRHPNRADIKPILDVLEPCLSFQRTGSCHRSELDSWTTHSPGGLLGSIRSTFQGLVLWSTSPGVSMAPHSYTHRQLVAGIRMLGSARVLTAIVDELKMQTETGNADLALDIAVTMICAPLAESFAIEQSNYHPVDPNKEPLPRCPVLTLRDALNLQHENVPKLSEKDPLRAEVIVRLYRRVNALMTPTSQMPNLDMSNIIQDMQLGVEDHGQMDLEPAGAGHGVGDDDAANLNRMLDNAAAAAAAGLDSGMGQGMGGGLDTSIDDVLNAADMAVGNPEFLDLDMEGMF</sequence>
<name>MED5_ASPOR</name>
<feature type="chain" id="PRO_0000302769" description="Mediator of RNA polymerase II transcription subunit 5">
    <location>
        <begin position="1"/>
        <end position="1013"/>
    </location>
</feature>
<dbReference type="EMBL" id="BA000051">
    <property type="protein sequence ID" value="BAE59421.1"/>
    <property type="status" value="ALT_SEQ"/>
    <property type="molecule type" value="Genomic_DNA"/>
</dbReference>
<dbReference type="RefSeq" id="XP_001821423.2">
    <property type="nucleotide sequence ID" value="XM_001821371.2"/>
</dbReference>
<dbReference type="SMR" id="Q2UG94"/>
<dbReference type="STRING" id="510516.Q2UG94"/>
<dbReference type="VEuPathDB" id="FungiDB:AO090023000929"/>
<dbReference type="Proteomes" id="UP000006564">
    <property type="component" value="Chromosome 3"/>
</dbReference>
<dbReference type="GO" id="GO:0016592">
    <property type="term" value="C:mediator complex"/>
    <property type="evidence" value="ECO:0007669"/>
    <property type="project" value="InterPro"/>
</dbReference>
<dbReference type="GO" id="GO:0003712">
    <property type="term" value="F:transcription coregulator activity"/>
    <property type="evidence" value="ECO:0007669"/>
    <property type="project" value="InterPro"/>
</dbReference>
<dbReference type="GO" id="GO:0006357">
    <property type="term" value="P:regulation of transcription by RNA polymerase II"/>
    <property type="evidence" value="ECO:0007669"/>
    <property type="project" value="InterPro"/>
</dbReference>
<dbReference type="InterPro" id="IPR014801">
    <property type="entry name" value="Mediator_Med5_fun"/>
</dbReference>
<dbReference type="PANTHER" id="PTHR35784">
    <property type="entry name" value="MEDIATOR OF RNA POLYMERASE II TRANSCRIPTION SUBUNIT 5"/>
    <property type="match status" value="1"/>
</dbReference>
<dbReference type="PANTHER" id="PTHR35784:SF1">
    <property type="entry name" value="MEDIATOR OF RNA POLYMERASE II TRANSCRIPTION SUBUNIT 5"/>
    <property type="match status" value="1"/>
</dbReference>
<dbReference type="Pfam" id="PF08689">
    <property type="entry name" value="Med5"/>
    <property type="match status" value="1"/>
</dbReference>
<protein>
    <recommendedName>
        <fullName>Mediator of RNA polymerase II transcription subunit 5</fullName>
    </recommendedName>
    <alternativeName>
        <fullName>Mediator complex subunit 5</fullName>
    </alternativeName>
</protein>